<comment type="function">
    <text evidence="1">Facilitates protein transport into the nucleus. Could be part of a multicomponent system of cytosolic factors that assemble at the pore complex during nuclear import (By similarity).</text>
</comment>
<comment type="subcellular location">
    <subcellularLocation>
        <location evidence="1">Cytoplasm</location>
    </subcellularLocation>
</comment>
<dbReference type="EMBL" id="CR380954">
    <property type="protein sequence ID" value="CAG60151.1"/>
    <property type="molecule type" value="Genomic_DNA"/>
</dbReference>
<dbReference type="RefSeq" id="XP_447218.1">
    <property type="nucleotide sequence ID" value="XM_447218.1"/>
</dbReference>
<dbReference type="SMR" id="Q6FRC6"/>
<dbReference type="FunCoup" id="Q6FRC6">
    <property type="interactions" value="1260"/>
</dbReference>
<dbReference type="STRING" id="284593.Q6FRC6"/>
<dbReference type="EnsemblFungi" id="CAGL0H09658g-T">
    <property type="protein sequence ID" value="CAGL0H09658g-T-p1"/>
    <property type="gene ID" value="CAGL0H09658g"/>
</dbReference>
<dbReference type="KEGG" id="cgr:2888732"/>
<dbReference type="CGD" id="CAL0131442">
    <property type="gene designation" value="CAGL0H09658g"/>
</dbReference>
<dbReference type="VEuPathDB" id="FungiDB:B1J91_H09658g"/>
<dbReference type="VEuPathDB" id="FungiDB:CAGL0H09658g"/>
<dbReference type="eggNOG" id="KOG2104">
    <property type="taxonomic scope" value="Eukaryota"/>
</dbReference>
<dbReference type="HOGENOM" id="CLU_131642_0_0_1"/>
<dbReference type="InParanoid" id="Q6FRC6"/>
<dbReference type="OMA" id="QFVEYYY"/>
<dbReference type="Proteomes" id="UP000002428">
    <property type="component" value="Chromosome H"/>
</dbReference>
<dbReference type="GO" id="GO:0005737">
    <property type="term" value="C:cytoplasm"/>
    <property type="evidence" value="ECO:0007669"/>
    <property type="project" value="UniProtKB-SubCell"/>
</dbReference>
<dbReference type="GO" id="GO:0005635">
    <property type="term" value="C:nuclear envelope"/>
    <property type="evidence" value="ECO:0007669"/>
    <property type="project" value="EnsemblFungi"/>
</dbReference>
<dbReference type="GO" id="GO:0031267">
    <property type="term" value="F:small GTPase binding"/>
    <property type="evidence" value="ECO:0007669"/>
    <property type="project" value="EnsemblFungi"/>
</dbReference>
<dbReference type="GO" id="GO:0006606">
    <property type="term" value="P:protein import into nucleus"/>
    <property type="evidence" value="ECO:0007669"/>
    <property type="project" value="EnsemblFungi"/>
</dbReference>
<dbReference type="CDD" id="cd00780">
    <property type="entry name" value="NTF2"/>
    <property type="match status" value="1"/>
</dbReference>
<dbReference type="FunFam" id="3.10.450.50:FF:000005">
    <property type="entry name" value="Nuclear transport factor 2"/>
    <property type="match status" value="1"/>
</dbReference>
<dbReference type="Gene3D" id="3.10.450.50">
    <property type="match status" value="1"/>
</dbReference>
<dbReference type="InterPro" id="IPR045875">
    <property type="entry name" value="NTF2"/>
</dbReference>
<dbReference type="InterPro" id="IPR032710">
    <property type="entry name" value="NTF2-like_dom_sf"/>
</dbReference>
<dbReference type="InterPro" id="IPR002075">
    <property type="entry name" value="NTF2_dom"/>
</dbReference>
<dbReference type="InterPro" id="IPR018222">
    <property type="entry name" value="Nuclear_transport_factor_2_euk"/>
</dbReference>
<dbReference type="PANTHER" id="PTHR12612">
    <property type="entry name" value="NUCLEAR TRANSPORT FACTOR 2"/>
    <property type="match status" value="1"/>
</dbReference>
<dbReference type="Pfam" id="PF02136">
    <property type="entry name" value="NTF2"/>
    <property type="match status" value="1"/>
</dbReference>
<dbReference type="SUPFAM" id="SSF54427">
    <property type="entry name" value="NTF2-like"/>
    <property type="match status" value="1"/>
</dbReference>
<dbReference type="PROSITE" id="PS50177">
    <property type="entry name" value="NTF2_DOMAIN"/>
    <property type="match status" value="1"/>
</dbReference>
<protein>
    <recommendedName>
        <fullName>Nuclear transport factor 2</fullName>
        <shortName>NTF-2</shortName>
    </recommendedName>
</protein>
<evidence type="ECO:0000250" key="1"/>
<evidence type="ECO:0000255" key="2">
    <source>
        <dbReference type="PROSITE-ProRule" id="PRU00137"/>
    </source>
</evidence>
<keyword id="KW-0963">Cytoplasm</keyword>
<keyword id="KW-0653">Protein transport</keyword>
<keyword id="KW-1185">Reference proteome</keyword>
<keyword id="KW-0813">Transport</keyword>
<gene>
    <name type="primary">NTF2</name>
    <name type="ordered locus">CAGL0H09658g</name>
</gene>
<reference key="1">
    <citation type="journal article" date="2004" name="Nature">
        <title>Genome evolution in yeasts.</title>
        <authorList>
            <person name="Dujon B."/>
            <person name="Sherman D."/>
            <person name="Fischer G."/>
            <person name="Durrens P."/>
            <person name="Casaregola S."/>
            <person name="Lafontaine I."/>
            <person name="de Montigny J."/>
            <person name="Marck C."/>
            <person name="Neuveglise C."/>
            <person name="Talla E."/>
            <person name="Goffard N."/>
            <person name="Frangeul L."/>
            <person name="Aigle M."/>
            <person name="Anthouard V."/>
            <person name="Babour A."/>
            <person name="Barbe V."/>
            <person name="Barnay S."/>
            <person name="Blanchin S."/>
            <person name="Beckerich J.-M."/>
            <person name="Beyne E."/>
            <person name="Bleykasten C."/>
            <person name="Boisrame A."/>
            <person name="Boyer J."/>
            <person name="Cattolico L."/>
            <person name="Confanioleri F."/>
            <person name="de Daruvar A."/>
            <person name="Despons L."/>
            <person name="Fabre E."/>
            <person name="Fairhead C."/>
            <person name="Ferry-Dumazet H."/>
            <person name="Groppi A."/>
            <person name="Hantraye F."/>
            <person name="Hennequin C."/>
            <person name="Jauniaux N."/>
            <person name="Joyet P."/>
            <person name="Kachouri R."/>
            <person name="Kerrest A."/>
            <person name="Koszul R."/>
            <person name="Lemaire M."/>
            <person name="Lesur I."/>
            <person name="Ma L."/>
            <person name="Muller H."/>
            <person name="Nicaud J.-M."/>
            <person name="Nikolski M."/>
            <person name="Oztas S."/>
            <person name="Ozier-Kalogeropoulos O."/>
            <person name="Pellenz S."/>
            <person name="Potier S."/>
            <person name="Richard G.-F."/>
            <person name="Straub M.-L."/>
            <person name="Suleau A."/>
            <person name="Swennen D."/>
            <person name="Tekaia F."/>
            <person name="Wesolowski-Louvel M."/>
            <person name="Westhof E."/>
            <person name="Wirth B."/>
            <person name="Zeniou-Meyer M."/>
            <person name="Zivanovic Y."/>
            <person name="Bolotin-Fukuhara M."/>
            <person name="Thierry A."/>
            <person name="Bouchier C."/>
            <person name="Caudron B."/>
            <person name="Scarpelli C."/>
            <person name="Gaillardin C."/>
            <person name="Weissenbach J."/>
            <person name="Wincker P."/>
            <person name="Souciet J.-L."/>
        </authorList>
    </citation>
    <scope>NUCLEOTIDE SEQUENCE [LARGE SCALE GENOMIC DNA]</scope>
    <source>
        <strain>ATCC 2001 / BCRC 20586 / JCM 3761 / NBRC 0622 / NRRL Y-65 / CBS 138</strain>
    </source>
</reference>
<accession>Q6FRC6</accession>
<proteinExistence type="inferred from homology"/>
<sequence>MSMDFNALAQQFTEFYYNQFDSDRSQLGNLYRDESMLTFETSQLQGAKSIVEKLVSLPFQKVAHRITTLDAQPASPNGDVLVMITGDLLIDDEQNPQRFSQVFHLIPDGNSYYVFNDIFRLNYSA</sequence>
<feature type="chain" id="PRO_0000194784" description="Nuclear transport factor 2">
    <location>
        <begin position="1"/>
        <end position="125"/>
    </location>
</feature>
<feature type="domain" description="NTF2" evidence="2">
    <location>
        <begin position="8"/>
        <end position="121"/>
    </location>
</feature>
<name>NTF2_CANGA</name>
<organism>
    <name type="scientific">Candida glabrata (strain ATCC 2001 / BCRC 20586 / JCM 3761 / NBRC 0622 / NRRL Y-65 / CBS 138)</name>
    <name type="common">Yeast</name>
    <name type="synonym">Nakaseomyces glabratus</name>
    <dbReference type="NCBI Taxonomy" id="284593"/>
    <lineage>
        <taxon>Eukaryota</taxon>
        <taxon>Fungi</taxon>
        <taxon>Dikarya</taxon>
        <taxon>Ascomycota</taxon>
        <taxon>Saccharomycotina</taxon>
        <taxon>Saccharomycetes</taxon>
        <taxon>Saccharomycetales</taxon>
        <taxon>Saccharomycetaceae</taxon>
        <taxon>Nakaseomyces</taxon>
    </lineage>
</organism>